<feature type="chain" id="PRO_0000163943" description="tRNA dimethylallyltransferase">
    <location>
        <begin position="1"/>
        <end position="313"/>
    </location>
</feature>
<feature type="region of interest" description="Interaction with substrate tRNA" evidence="1">
    <location>
        <begin position="36"/>
        <end position="39"/>
    </location>
</feature>
<feature type="region of interest" description="Interaction with substrate tRNA" evidence="1">
    <location>
        <begin position="160"/>
        <end position="164"/>
    </location>
</feature>
<feature type="region of interest" description="Interaction with substrate tRNA" evidence="1">
    <location>
        <begin position="243"/>
        <end position="248"/>
    </location>
</feature>
<feature type="binding site" evidence="1">
    <location>
        <begin position="11"/>
        <end position="18"/>
    </location>
    <ligand>
        <name>ATP</name>
        <dbReference type="ChEBI" id="CHEBI:30616"/>
    </ligand>
</feature>
<feature type="binding site" evidence="1">
    <location>
        <begin position="13"/>
        <end position="18"/>
    </location>
    <ligand>
        <name>substrate</name>
    </ligand>
</feature>
<feature type="site" description="Interaction with substrate tRNA" evidence="1">
    <location>
        <position position="102"/>
    </location>
</feature>
<feature type="site" description="Interaction with substrate tRNA" evidence="1">
    <location>
        <position position="124"/>
    </location>
</feature>
<protein>
    <recommendedName>
        <fullName evidence="1">tRNA dimethylallyltransferase</fullName>
        <ecNumber evidence="1">2.5.1.75</ecNumber>
    </recommendedName>
    <alternativeName>
        <fullName evidence="1">Dimethylallyl diphosphate:tRNA dimethylallyltransferase</fullName>
        <shortName evidence="1">DMAPP:tRNA dimethylallyltransferase</shortName>
        <shortName evidence="1">DMATase</shortName>
    </alternativeName>
    <alternativeName>
        <fullName evidence="1">Isopentenyl-diphosphate:tRNA isopentenyltransferase</fullName>
        <shortName evidence="1">IPP transferase</shortName>
        <shortName evidence="1">IPPT</shortName>
        <shortName evidence="1">IPTase</shortName>
    </alternativeName>
</protein>
<reference key="1">
    <citation type="journal article" date="2000" name="Nature">
        <title>Complete DNA sequence of a serogroup A strain of Neisseria meningitidis Z2491.</title>
        <authorList>
            <person name="Parkhill J."/>
            <person name="Achtman M."/>
            <person name="James K.D."/>
            <person name="Bentley S.D."/>
            <person name="Churcher C.M."/>
            <person name="Klee S.R."/>
            <person name="Morelli G."/>
            <person name="Basham D."/>
            <person name="Brown D."/>
            <person name="Chillingworth T."/>
            <person name="Davies R.M."/>
            <person name="Davis P."/>
            <person name="Devlin K."/>
            <person name="Feltwell T."/>
            <person name="Hamlin N."/>
            <person name="Holroyd S."/>
            <person name="Jagels K."/>
            <person name="Leather S."/>
            <person name="Moule S."/>
            <person name="Mungall K.L."/>
            <person name="Quail M.A."/>
            <person name="Rajandream M.A."/>
            <person name="Rutherford K.M."/>
            <person name="Simmonds M."/>
            <person name="Skelton J."/>
            <person name="Whitehead S."/>
            <person name="Spratt B.G."/>
            <person name="Barrell B.G."/>
        </authorList>
    </citation>
    <scope>NUCLEOTIDE SEQUENCE [LARGE SCALE GENOMIC DNA]</scope>
    <source>
        <strain>DSM 15465 / Z2491</strain>
    </source>
</reference>
<name>MIAA_NEIMA</name>
<gene>
    <name evidence="1" type="primary">miaA</name>
    <name type="ordered locus">NMA1130</name>
</gene>
<sequence length="313" mass="35011">MPTPKAFALLGPTAGGKTALALKIAETLPVEIISLDSALVYRDMDIGTAKPSASERAFVPHHLIDIITPVQTYSAARFVEDCTRLIGEITARGKYPLIVGGTMMYFRALTQGLNDLPEADACLRADLDEQKQMYGLDFLYRTLQQVDPETACRLKPNDSQRIGRALEVYYLTGKPMSEHLGRQSPHTLPFDLHTAALIPENRARLHENIALRFHLMLEQGFIGEVENLRRRYPSLTADSPAIRCVGYRQAWEYLDGATDRQTFIEKGIAATRQLAKRQLTWLRKTPLDCVADPFSDGTSCTRLIEAAKRFFGV</sequence>
<keyword id="KW-0067">ATP-binding</keyword>
<keyword id="KW-0460">Magnesium</keyword>
<keyword id="KW-0547">Nucleotide-binding</keyword>
<keyword id="KW-0808">Transferase</keyword>
<keyword id="KW-0819">tRNA processing</keyword>
<organism>
    <name type="scientific">Neisseria meningitidis serogroup A / serotype 4A (strain DSM 15465 / Z2491)</name>
    <dbReference type="NCBI Taxonomy" id="122587"/>
    <lineage>
        <taxon>Bacteria</taxon>
        <taxon>Pseudomonadati</taxon>
        <taxon>Pseudomonadota</taxon>
        <taxon>Betaproteobacteria</taxon>
        <taxon>Neisseriales</taxon>
        <taxon>Neisseriaceae</taxon>
        <taxon>Neisseria</taxon>
    </lineage>
</organism>
<proteinExistence type="inferred from homology"/>
<dbReference type="EC" id="2.5.1.75" evidence="1"/>
<dbReference type="EMBL" id="AL157959">
    <property type="protein sequence ID" value="CAM08337.1"/>
    <property type="molecule type" value="Genomic_DNA"/>
</dbReference>
<dbReference type="PIR" id="E81879">
    <property type="entry name" value="E81879"/>
</dbReference>
<dbReference type="RefSeq" id="WP_002246865.1">
    <property type="nucleotide sequence ID" value="NC_003116.1"/>
</dbReference>
<dbReference type="SMR" id="Q9JUU5"/>
<dbReference type="EnsemblBacteria" id="CAM08337">
    <property type="protein sequence ID" value="CAM08337"/>
    <property type="gene ID" value="NMA1130"/>
</dbReference>
<dbReference type="GeneID" id="93386258"/>
<dbReference type="KEGG" id="nma:NMA1130"/>
<dbReference type="HOGENOM" id="CLU_032616_0_0_4"/>
<dbReference type="Proteomes" id="UP000000626">
    <property type="component" value="Chromosome"/>
</dbReference>
<dbReference type="GO" id="GO:0005524">
    <property type="term" value="F:ATP binding"/>
    <property type="evidence" value="ECO:0007669"/>
    <property type="project" value="UniProtKB-UniRule"/>
</dbReference>
<dbReference type="GO" id="GO:0052381">
    <property type="term" value="F:tRNA dimethylallyltransferase activity"/>
    <property type="evidence" value="ECO:0007669"/>
    <property type="project" value="UniProtKB-UniRule"/>
</dbReference>
<dbReference type="GO" id="GO:0006400">
    <property type="term" value="P:tRNA modification"/>
    <property type="evidence" value="ECO:0007669"/>
    <property type="project" value="TreeGrafter"/>
</dbReference>
<dbReference type="FunFam" id="1.10.20.140:FF:000001">
    <property type="entry name" value="tRNA dimethylallyltransferase"/>
    <property type="match status" value="1"/>
</dbReference>
<dbReference type="Gene3D" id="1.10.20.140">
    <property type="match status" value="1"/>
</dbReference>
<dbReference type="Gene3D" id="3.40.50.300">
    <property type="entry name" value="P-loop containing nucleotide triphosphate hydrolases"/>
    <property type="match status" value="1"/>
</dbReference>
<dbReference type="HAMAP" id="MF_00185">
    <property type="entry name" value="IPP_trans"/>
    <property type="match status" value="1"/>
</dbReference>
<dbReference type="InterPro" id="IPR039657">
    <property type="entry name" value="Dimethylallyltransferase"/>
</dbReference>
<dbReference type="InterPro" id="IPR018022">
    <property type="entry name" value="IPT"/>
</dbReference>
<dbReference type="InterPro" id="IPR027417">
    <property type="entry name" value="P-loop_NTPase"/>
</dbReference>
<dbReference type="NCBIfam" id="TIGR00174">
    <property type="entry name" value="miaA"/>
    <property type="match status" value="1"/>
</dbReference>
<dbReference type="PANTHER" id="PTHR11088">
    <property type="entry name" value="TRNA DIMETHYLALLYLTRANSFERASE"/>
    <property type="match status" value="1"/>
</dbReference>
<dbReference type="PANTHER" id="PTHR11088:SF60">
    <property type="entry name" value="TRNA DIMETHYLALLYLTRANSFERASE"/>
    <property type="match status" value="1"/>
</dbReference>
<dbReference type="Pfam" id="PF01715">
    <property type="entry name" value="IPPT"/>
    <property type="match status" value="1"/>
</dbReference>
<dbReference type="SUPFAM" id="SSF52540">
    <property type="entry name" value="P-loop containing nucleoside triphosphate hydrolases"/>
    <property type="match status" value="1"/>
</dbReference>
<comment type="function">
    <text evidence="1">Catalyzes the transfer of a dimethylallyl group onto the adenine at position 37 in tRNAs that read codons beginning with uridine, leading to the formation of N6-(dimethylallyl)adenosine (i(6)A).</text>
</comment>
<comment type="catalytic activity">
    <reaction evidence="1">
        <text>adenosine(37) in tRNA + dimethylallyl diphosphate = N(6)-dimethylallyladenosine(37) in tRNA + diphosphate</text>
        <dbReference type="Rhea" id="RHEA:26482"/>
        <dbReference type="Rhea" id="RHEA-COMP:10162"/>
        <dbReference type="Rhea" id="RHEA-COMP:10375"/>
        <dbReference type="ChEBI" id="CHEBI:33019"/>
        <dbReference type="ChEBI" id="CHEBI:57623"/>
        <dbReference type="ChEBI" id="CHEBI:74411"/>
        <dbReference type="ChEBI" id="CHEBI:74415"/>
        <dbReference type="EC" id="2.5.1.75"/>
    </reaction>
</comment>
<comment type="cofactor">
    <cofactor evidence="1">
        <name>Mg(2+)</name>
        <dbReference type="ChEBI" id="CHEBI:18420"/>
    </cofactor>
</comment>
<comment type="subunit">
    <text evidence="1">Monomer.</text>
</comment>
<comment type="similarity">
    <text evidence="1">Belongs to the IPP transferase family.</text>
</comment>
<evidence type="ECO:0000255" key="1">
    <source>
        <dbReference type="HAMAP-Rule" id="MF_00185"/>
    </source>
</evidence>
<accession>Q9JUU5</accession>
<accession>A1IRF1</accession>